<keyword id="KW-0030">Aminoacyl-tRNA synthetase</keyword>
<keyword id="KW-0067">ATP-binding</keyword>
<keyword id="KW-0963">Cytoplasm</keyword>
<keyword id="KW-0436">Ligase</keyword>
<keyword id="KW-0547">Nucleotide-binding</keyword>
<keyword id="KW-0648">Protein biosynthesis</keyword>
<keyword id="KW-1185">Reference proteome</keyword>
<dbReference type="EC" id="6.1.1.14" evidence="1"/>
<dbReference type="EMBL" id="CP000148">
    <property type="protein sequence ID" value="ABB33159.1"/>
    <property type="molecule type" value="Genomic_DNA"/>
</dbReference>
<dbReference type="RefSeq" id="WP_004512877.1">
    <property type="nucleotide sequence ID" value="NC_007517.1"/>
</dbReference>
<dbReference type="SMR" id="Q39RG5"/>
<dbReference type="STRING" id="269799.Gmet_2941"/>
<dbReference type="KEGG" id="gme:Gmet_2941"/>
<dbReference type="eggNOG" id="COG0751">
    <property type="taxonomic scope" value="Bacteria"/>
</dbReference>
<dbReference type="HOGENOM" id="CLU_007220_2_2_7"/>
<dbReference type="Proteomes" id="UP000007073">
    <property type="component" value="Chromosome"/>
</dbReference>
<dbReference type="GO" id="GO:0005829">
    <property type="term" value="C:cytosol"/>
    <property type="evidence" value="ECO:0007669"/>
    <property type="project" value="TreeGrafter"/>
</dbReference>
<dbReference type="GO" id="GO:0005524">
    <property type="term" value="F:ATP binding"/>
    <property type="evidence" value="ECO:0007669"/>
    <property type="project" value="UniProtKB-UniRule"/>
</dbReference>
<dbReference type="GO" id="GO:0004820">
    <property type="term" value="F:glycine-tRNA ligase activity"/>
    <property type="evidence" value="ECO:0007669"/>
    <property type="project" value="UniProtKB-UniRule"/>
</dbReference>
<dbReference type="GO" id="GO:0006426">
    <property type="term" value="P:glycyl-tRNA aminoacylation"/>
    <property type="evidence" value="ECO:0007669"/>
    <property type="project" value="UniProtKB-UniRule"/>
</dbReference>
<dbReference type="HAMAP" id="MF_00255">
    <property type="entry name" value="Gly_tRNA_synth_beta"/>
    <property type="match status" value="1"/>
</dbReference>
<dbReference type="InterPro" id="IPR015944">
    <property type="entry name" value="Gly-tRNA-synth_bsu"/>
</dbReference>
<dbReference type="InterPro" id="IPR006194">
    <property type="entry name" value="Gly-tRNA-synth_heterodimer"/>
</dbReference>
<dbReference type="NCBIfam" id="TIGR00211">
    <property type="entry name" value="glyS"/>
    <property type="match status" value="1"/>
</dbReference>
<dbReference type="PANTHER" id="PTHR30075:SF2">
    <property type="entry name" value="GLYCINE--TRNA LIGASE, CHLOROPLASTIC_MITOCHONDRIAL 2"/>
    <property type="match status" value="1"/>
</dbReference>
<dbReference type="PANTHER" id="PTHR30075">
    <property type="entry name" value="GLYCYL-TRNA SYNTHETASE"/>
    <property type="match status" value="1"/>
</dbReference>
<dbReference type="Pfam" id="PF02092">
    <property type="entry name" value="tRNA_synt_2f"/>
    <property type="match status" value="1"/>
</dbReference>
<dbReference type="PRINTS" id="PR01045">
    <property type="entry name" value="TRNASYNTHGB"/>
</dbReference>
<dbReference type="SUPFAM" id="SSF109604">
    <property type="entry name" value="HD-domain/PDEase-like"/>
    <property type="match status" value="1"/>
</dbReference>
<dbReference type="PROSITE" id="PS50861">
    <property type="entry name" value="AA_TRNA_LIGASE_II_GLYAB"/>
    <property type="match status" value="1"/>
</dbReference>
<accession>Q39RG5</accession>
<comment type="catalytic activity">
    <reaction evidence="1">
        <text>tRNA(Gly) + glycine + ATP = glycyl-tRNA(Gly) + AMP + diphosphate</text>
        <dbReference type="Rhea" id="RHEA:16013"/>
        <dbReference type="Rhea" id="RHEA-COMP:9664"/>
        <dbReference type="Rhea" id="RHEA-COMP:9683"/>
        <dbReference type="ChEBI" id="CHEBI:30616"/>
        <dbReference type="ChEBI" id="CHEBI:33019"/>
        <dbReference type="ChEBI" id="CHEBI:57305"/>
        <dbReference type="ChEBI" id="CHEBI:78442"/>
        <dbReference type="ChEBI" id="CHEBI:78522"/>
        <dbReference type="ChEBI" id="CHEBI:456215"/>
        <dbReference type="EC" id="6.1.1.14"/>
    </reaction>
</comment>
<comment type="subunit">
    <text evidence="1">Tetramer of two alpha and two beta subunits.</text>
</comment>
<comment type="subcellular location">
    <subcellularLocation>
        <location evidence="1">Cytoplasm</location>
    </subcellularLocation>
</comment>
<comment type="similarity">
    <text evidence="1">Belongs to the class-II aminoacyl-tRNA synthetase family.</text>
</comment>
<gene>
    <name evidence="1" type="primary">glyS</name>
    <name type="ordered locus">Gmet_2941</name>
</gene>
<proteinExistence type="inferred from homology"/>
<protein>
    <recommendedName>
        <fullName evidence="1">Glycine--tRNA ligase beta subunit</fullName>
        <ecNumber evidence="1">6.1.1.14</ecNumber>
    </recommendedName>
    <alternativeName>
        <fullName evidence="1">Glycyl-tRNA synthetase beta subunit</fullName>
        <shortName evidence="1">GlyRS</shortName>
    </alternativeName>
</protein>
<sequence length="686" mass="74759">MKELFLEIGTEEIPAGFIPKAMADMEALLAKELENARISFDDIRTLGTPRRLALTVKGLPTVQPDAEITAMGPARNVAFDAEGKPTRAAEGFARGQGVDVASLTLVATEKGEYVAAVRKESGRPVPELLAEILPRLVANIPFRKSMRWGALDVRFARPIHWIVALFDGVVVPFTFGNIESGTISRGHRFMANQPFPVRDFAHYLEECERHFVIPDPERRQEIIRREIHRVAKAAGGHLLPDEGLLEEVSFLCEYPSAVHGTFSAEFLKVPREVLITSMRSHQRYFSIVDDAGKLMPGFITINNTLTEDPTVVVKGNERVLRARLSDARFFFEEDQKVKLETRVESLKNVVYQQKLGTSFEKMERFRALAEGLADLLNPAVKVKVSQAAFLCKADLVSGMVGEFPEVQGIMGREYALIEGEDAEVAAAIAEHYLPTQAGGELPASDIGAFVSMADKLDTICGCFGVGLIPTGSADPYALRRSALGIINIILDKGYRLSLEEQVDKALGLLAAKLTRPAVDVKADVLEFFRGRFVNLMADRHASDAVDAAVAAGCADLVDAAARIAALSEFRSHPDFEPLAVAFKRVGNIVKEGVDAPVDTALFQDAAEGLLNDAVQGVAVSVREKIATGAYLEALTEIAALRGPVDTFFDKVMVMAEDERVRTNRLALLTGIARMLGAIADFAKIAA</sequence>
<evidence type="ECO:0000255" key="1">
    <source>
        <dbReference type="HAMAP-Rule" id="MF_00255"/>
    </source>
</evidence>
<feature type="chain" id="PRO_1000006361" description="Glycine--tRNA ligase beta subunit">
    <location>
        <begin position="1"/>
        <end position="686"/>
    </location>
</feature>
<reference key="1">
    <citation type="journal article" date="2009" name="BMC Microbiol.">
        <title>The genome sequence of Geobacter metallireducens: features of metabolism, physiology and regulation common and dissimilar to Geobacter sulfurreducens.</title>
        <authorList>
            <person name="Aklujkar M."/>
            <person name="Krushkal J."/>
            <person name="DiBartolo G."/>
            <person name="Lapidus A."/>
            <person name="Land M.L."/>
            <person name="Lovley D.R."/>
        </authorList>
    </citation>
    <scope>NUCLEOTIDE SEQUENCE [LARGE SCALE GENOMIC DNA]</scope>
    <source>
        <strain>ATCC 53774 / DSM 7210 / GS-15</strain>
    </source>
</reference>
<organism>
    <name type="scientific">Geobacter metallireducens (strain ATCC 53774 / DSM 7210 / GS-15)</name>
    <dbReference type="NCBI Taxonomy" id="269799"/>
    <lineage>
        <taxon>Bacteria</taxon>
        <taxon>Pseudomonadati</taxon>
        <taxon>Thermodesulfobacteriota</taxon>
        <taxon>Desulfuromonadia</taxon>
        <taxon>Geobacterales</taxon>
        <taxon>Geobacteraceae</taxon>
        <taxon>Geobacter</taxon>
    </lineage>
</organism>
<name>SYGB_GEOMG</name>